<feature type="chain" id="PRO_0000375334" description="YcgL domain-containing protein Pmen_1774">
    <location>
        <begin position="1"/>
        <end position="97"/>
    </location>
</feature>
<feature type="domain" description="YcgL" evidence="1">
    <location>
        <begin position="3"/>
        <end position="87"/>
    </location>
</feature>
<proteinExistence type="inferred from homology"/>
<name>Y1774_ECTM1</name>
<protein>
    <recommendedName>
        <fullName evidence="1">YcgL domain-containing protein Pmen_1774</fullName>
    </recommendedName>
</protein>
<evidence type="ECO:0000255" key="1">
    <source>
        <dbReference type="HAMAP-Rule" id="MF_01866"/>
    </source>
</evidence>
<sequence>MKRICSIYKSPRKNEMYLYVLKADALTRVPEGLLGIFGPPAHAFDLVLSPERQLAREDIATVLENLDKQGYHLQMPPPEEDYIQHLPDELLCRNDPV</sequence>
<gene>
    <name type="ordered locus">Pmen_1774</name>
</gene>
<reference key="1">
    <citation type="submission" date="2007-04" db="EMBL/GenBank/DDBJ databases">
        <title>Complete sequence of Pseudomonas mendocina ymp.</title>
        <authorList>
            <consortium name="US DOE Joint Genome Institute"/>
            <person name="Copeland A."/>
            <person name="Lucas S."/>
            <person name="Lapidus A."/>
            <person name="Barry K."/>
            <person name="Glavina del Rio T."/>
            <person name="Dalin E."/>
            <person name="Tice H."/>
            <person name="Pitluck S."/>
            <person name="Kiss H."/>
            <person name="Brettin T."/>
            <person name="Detter J.C."/>
            <person name="Bruce D."/>
            <person name="Han C."/>
            <person name="Schmutz J."/>
            <person name="Larimer F."/>
            <person name="Land M."/>
            <person name="Hauser L."/>
            <person name="Kyrpides N."/>
            <person name="Mikhailova N."/>
            <person name="Hersman L."/>
            <person name="Dubois J."/>
            <person name="Maurice P."/>
            <person name="Richardson P."/>
        </authorList>
    </citation>
    <scope>NUCLEOTIDE SEQUENCE [LARGE SCALE GENOMIC DNA]</scope>
    <source>
        <strain>ymp</strain>
    </source>
</reference>
<dbReference type="EMBL" id="CP000680">
    <property type="protein sequence ID" value="ABP84538.1"/>
    <property type="molecule type" value="Genomic_DNA"/>
</dbReference>
<dbReference type="SMR" id="A4XT72"/>
<dbReference type="STRING" id="399739.Pmen_1774"/>
<dbReference type="KEGG" id="pmy:Pmen_1774"/>
<dbReference type="PATRIC" id="fig|399739.8.peg.1800"/>
<dbReference type="eggNOG" id="COG3100">
    <property type="taxonomic scope" value="Bacteria"/>
</dbReference>
<dbReference type="HOGENOM" id="CLU_155118_2_0_6"/>
<dbReference type="OrthoDB" id="7062382at2"/>
<dbReference type="Gene3D" id="3.10.510.20">
    <property type="entry name" value="YcgL domain"/>
    <property type="match status" value="1"/>
</dbReference>
<dbReference type="HAMAP" id="MF_01866">
    <property type="entry name" value="UPF0745"/>
    <property type="match status" value="1"/>
</dbReference>
<dbReference type="InterPro" id="IPR038068">
    <property type="entry name" value="YcgL-like_sf"/>
</dbReference>
<dbReference type="InterPro" id="IPR027354">
    <property type="entry name" value="YcgL_dom"/>
</dbReference>
<dbReference type="PANTHER" id="PTHR38109">
    <property type="entry name" value="PROTEIN YCGL"/>
    <property type="match status" value="1"/>
</dbReference>
<dbReference type="PANTHER" id="PTHR38109:SF1">
    <property type="entry name" value="PROTEIN YCGL"/>
    <property type="match status" value="1"/>
</dbReference>
<dbReference type="Pfam" id="PF05166">
    <property type="entry name" value="YcgL"/>
    <property type="match status" value="1"/>
</dbReference>
<dbReference type="SUPFAM" id="SSF160191">
    <property type="entry name" value="YcgL-like"/>
    <property type="match status" value="1"/>
</dbReference>
<dbReference type="PROSITE" id="PS51648">
    <property type="entry name" value="YCGL"/>
    <property type="match status" value="1"/>
</dbReference>
<accession>A4XT72</accession>
<organism>
    <name type="scientific">Ectopseudomonas mendocina (strain ymp)</name>
    <name type="common">Pseudomonas mendocina</name>
    <dbReference type="NCBI Taxonomy" id="399739"/>
    <lineage>
        <taxon>Bacteria</taxon>
        <taxon>Pseudomonadati</taxon>
        <taxon>Pseudomonadota</taxon>
        <taxon>Gammaproteobacteria</taxon>
        <taxon>Pseudomonadales</taxon>
        <taxon>Pseudomonadaceae</taxon>
        <taxon>Ectopseudomonas</taxon>
    </lineage>
</organism>